<organism>
    <name type="scientific">Bacillus cereus (strain Q1)</name>
    <dbReference type="NCBI Taxonomy" id="361100"/>
    <lineage>
        <taxon>Bacteria</taxon>
        <taxon>Bacillati</taxon>
        <taxon>Bacillota</taxon>
        <taxon>Bacilli</taxon>
        <taxon>Bacillales</taxon>
        <taxon>Bacillaceae</taxon>
        <taxon>Bacillus</taxon>
        <taxon>Bacillus cereus group</taxon>
    </lineage>
</organism>
<sequence length="591" mass="66336">MAERTHACGKVTVEAVGQTVQLKGWVQKRRDLGGLIFIDLRDRTGIVQVVFNPETSKEALEVAETIRSEYVLHVEGTVVERGEGAINDNMATGRIEVQATKVNVLNAAKTTPIIIADDTDASEDVRLKYRYLDLRRPVMFNTFKMRHDVTKTIRNFLDTEEFLEVETPILTKSTPEGARDYLVPSRVHDGEFYALPQSPQLFKQLLMVGGFERYYQVARCFRDEDLRADRQPEFTQIDIEASFLTQEEILDMMERMMTKVMKDAKGVEISAPFPRMTYADAMARYGSDKPDTRFEMELTDLSEFAAGCGFKVFTSAVESGGQVKAINAKGAASKYSRKDIDALTEFVKVYGAKGLAWLKVEEDGLKGPIAKFFGEEDANVLMNTLEATAGDLLLFVADKKSVVADSLGALRLRLGKELELIDESKFNFLWVTDWPLLEYDEDADRYFAAHHPFTMPFREDVELLETAPEKARAQAYDLVLNGYELGGGSLRIYERDVQEKMFKALGFSQEEAQEQFGFLLEAFEYGTPPHGGIALGLDRLVMLLAGRTNLRDTIAFPKTASASCLLTEAPSPVAEAQLEELNLKLSLKEEK</sequence>
<proteinExistence type="inferred from homology"/>
<protein>
    <recommendedName>
        <fullName evidence="1">Aspartate--tRNA(Asp/Asn) ligase</fullName>
        <ecNumber evidence="1">6.1.1.23</ecNumber>
    </recommendedName>
    <alternativeName>
        <fullName evidence="1">Aspartyl-tRNA synthetase</fullName>
        <shortName evidence="1">AspRS</shortName>
    </alternativeName>
    <alternativeName>
        <fullName evidence="1">Non-discriminating aspartyl-tRNA synthetase</fullName>
        <shortName evidence="1">ND-AspRS</shortName>
    </alternativeName>
</protein>
<reference key="1">
    <citation type="journal article" date="2009" name="J. Bacteriol.">
        <title>Complete genome sequence of the extremophilic Bacillus cereus strain Q1 with industrial applications.</title>
        <authorList>
            <person name="Xiong Z."/>
            <person name="Jiang Y."/>
            <person name="Qi D."/>
            <person name="Lu H."/>
            <person name="Yang F."/>
            <person name="Yang J."/>
            <person name="Chen L."/>
            <person name="Sun L."/>
            <person name="Xu X."/>
            <person name="Xue Y."/>
            <person name="Zhu Y."/>
            <person name="Jin Q."/>
        </authorList>
    </citation>
    <scope>NUCLEOTIDE SEQUENCE [LARGE SCALE GENOMIC DNA]</scope>
    <source>
        <strain>Q1</strain>
    </source>
</reference>
<gene>
    <name evidence="1" type="primary">aspS</name>
    <name type="ordered locus">BCQ_4187</name>
</gene>
<evidence type="ECO:0000255" key="1">
    <source>
        <dbReference type="HAMAP-Rule" id="MF_00044"/>
    </source>
</evidence>
<name>SYDND_BACCQ</name>
<dbReference type="EC" id="6.1.1.23" evidence="1"/>
<dbReference type="EMBL" id="CP000227">
    <property type="protein sequence ID" value="ACM14614.1"/>
    <property type="molecule type" value="Genomic_DNA"/>
</dbReference>
<dbReference type="SMR" id="B9IYX5"/>
<dbReference type="KEGG" id="bcq:BCQ_4187"/>
<dbReference type="HOGENOM" id="CLU_014330_3_2_9"/>
<dbReference type="Proteomes" id="UP000000441">
    <property type="component" value="Chromosome"/>
</dbReference>
<dbReference type="GO" id="GO:0005737">
    <property type="term" value="C:cytoplasm"/>
    <property type="evidence" value="ECO:0007669"/>
    <property type="project" value="UniProtKB-SubCell"/>
</dbReference>
<dbReference type="GO" id="GO:0004815">
    <property type="term" value="F:aspartate-tRNA ligase activity"/>
    <property type="evidence" value="ECO:0007669"/>
    <property type="project" value="UniProtKB-UniRule"/>
</dbReference>
<dbReference type="GO" id="GO:0050560">
    <property type="term" value="F:aspartate-tRNA(Asn) ligase activity"/>
    <property type="evidence" value="ECO:0007669"/>
    <property type="project" value="UniProtKB-EC"/>
</dbReference>
<dbReference type="GO" id="GO:0005524">
    <property type="term" value="F:ATP binding"/>
    <property type="evidence" value="ECO:0007669"/>
    <property type="project" value="UniProtKB-UniRule"/>
</dbReference>
<dbReference type="GO" id="GO:0140096">
    <property type="term" value="F:catalytic activity, acting on a protein"/>
    <property type="evidence" value="ECO:0007669"/>
    <property type="project" value="UniProtKB-ARBA"/>
</dbReference>
<dbReference type="GO" id="GO:0003676">
    <property type="term" value="F:nucleic acid binding"/>
    <property type="evidence" value="ECO:0007669"/>
    <property type="project" value="InterPro"/>
</dbReference>
<dbReference type="GO" id="GO:0016740">
    <property type="term" value="F:transferase activity"/>
    <property type="evidence" value="ECO:0007669"/>
    <property type="project" value="UniProtKB-ARBA"/>
</dbReference>
<dbReference type="GO" id="GO:0006422">
    <property type="term" value="P:aspartyl-tRNA aminoacylation"/>
    <property type="evidence" value="ECO:0007669"/>
    <property type="project" value="UniProtKB-UniRule"/>
</dbReference>
<dbReference type="CDD" id="cd00777">
    <property type="entry name" value="AspRS_core"/>
    <property type="match status" value="1"/>
</dbReference>
<dbReference type="CDD" id="cd04317">
    <property type="entry name" value="EcAspRS_like_N"/>
    <property type="match status" value="1"/>
</dbReference>
<dbReference type="Gene3D" id="3.30.930.10">
    <property type="entry name" value="Bira Bifunctional Protein, Domain 2"/>
    <property type="match status" value="1"/>
</dbReference>
<dbReference type="Gene3D" id="3.30.1360.30">
    <property type="entry name" value="GAD-like domain"/>
    <property type="match status" value="1"/>
</dbReference>
<dbReference type="Gene3D" id="2.40.50.140">
    <property type="entry name" value="Nucleic acid-binding proteins"/>
    <property type="match status" value="1"/>
</dbReference>
<dbReference type="HAMAP" id="MF_00044">
    <property type="entry name" value="Asp_tRNA_synth_type1"/>
    <property type="match status" value="1"/>
</dbReference>
<dbReference type="InterPro" id="IPR004364">
    <property type="entry name" value="Aa-tRNA-synt_II"/>
</dbReference>
<dbReference type="InterPro" id="IPR006195">
    <property type="entry name" value="aa-tRNA-synth_II"/>
</dbReference>
<dbReference type="InterPro" id="IPR045864">
    <property type="entry name" value="aa-tRNA-synth_II/BPL/LPL"/>
</dbReference>
<dbReference type="InterPro" id="IPR004524">
    <property type="entry name" value="Asp-tRNA-ligase_1"/>
</dbReference>
<dbReference type="InterPro" id="IPR047089">
    <property type="entry name" value="Asp-tRNA-ligase_1_N"/>
</dbReference>
<dbReference type="InterPro" id="IPR002312">
    <property type="entry name" value="Asp/Asn-tRNA-synth_IIb"/>
</dbReference>
<dbReference type="InterPro" id="IPR047090">
    <property type="entry name" value="AspRS_core"/>
</dbReference>
<dbReference type="InterPro" id="IPR004115">
    <property type="entry name" value="GAD-like_sf"/>
</dbReference>
<dbReference type="InterPro" id="IPR029351">
    <property type="entry name" value="GAD_dom"/>
</dbReference>
<dbReference type="InterPro" id="IPR012340">
    <property type="entry name" value="NA-bd_OB-fold"/>
</dbReference>
<dbReference type="InterPro" id="IPR004365">
    <property type="entry name" value="NA-bd_OB_tRNA"/>
</dbReference>
<dbReference type="NCBIfam" id="TIGR00459">
    <property type="entry name" value="aspS_bact"/>
    <property type="match status" value="1"/>
</dbReference>
<dbReference type="NCBIfam" id="NF001750">
    <property type="entry name" value="PRK00476.1"/>
    <property type="match status" value="1"/>
</dbReference>
<dbReference type="PANTHER" id="PTHR22594:SF5">
    <property type="entry name" value="ASPARTATE--TRNA LIGASE, MITOCHONDRIAL"/>
    <property type="match status" value="1"/>
</dbReference>
<dbReference type="PANTHER" id="PTHR22594">
    <property type="entry name" value="ASPARTYL/LYSYL-TRNA SYNTHETASE"/>
    <property type="match status" value="1"/>
</dbReference>
<dbReference type="Pfam" id="PF02938">
    <property type="entry name" value="GAD"/>
    <property type="match status" value="1"/>
</dbReference>
<dbReference type="Pfam" id="PF00152">
    <property type="entry name" value="tRNA-synt_2"/>
    <property type="match status" value="1"/>
</dbReference>
<dbReference type="Pfam" id="PF01336">
    <property type="entry name" value="tRNA_anti-codon"/>
    <property type="match status" value="1"/>
</dbReference>
<dbReference type="PRINTS" id="PR01042">
    <property type="entry name" value="TRNASYNTHASP"/>
</dbReference>
<dbReference type="SUPFAM" id="SSF55681">
    <property type="entry name" value="Class II aaRS and biotin synthetases"/>
    <property type="match status" value="1"/>
</dbReference>
<dbReference type="SUPFAM" id="SSF55261">
    <property type="entry name" value="GAD domain-like"/>
    <property type="match status" value="1"/>
</dbReference>
<dbReference type="SUPFAM" id="SSF50249">
    <property type="entry name" value="Nucleic acid-binding proteins"/>
    <property type="match status" value="1"/>
</dbReference>
<dbReference type="PROSITE" id="PS50862">
    <property type="entry name" value="AA_TRNA_LIGASE_II"/>
    <property type="match status" value="1"/>
</dbReference>
<keyword id="KW-0030">Aminoacyl-tRNA synthetase</keyword>
<keyword id="KW-0067">ATP-binding</keyword>
<keyword id="KW-0963">Cytoplasm</keyword>
<keyword id="KW-0436">Ligase</keyword>
<keyword id="KW-0547">Nucleotide-binding</keyword>
<keyword id="KW-0648">Protein biosynthesis</keyword>
<feature type="chain" id="PRO_1000198961" description="Aspartate--tRNA(Asp/Asn) ligase">
    <location>
        <begin position="1"/>
        <end position="591"/>
    </location>
</feature>
<feature type="region of interest" description="Aspartate" evidence="1">
    <location>
        <begin position="200"/>
        <end position="203"/>
    </location>
</feature>
<feature type="binding site" evidence="1">
    <location>
        <position position="176"/>
    </location>
    <ligand>
        <name>L-aspartate</name>
        <dbReference type="ChEBI" id="CHEBI:29991"/>
    </ligand>
</feature>
<feature type="binding site" evidence="1">
    <location>
        <begin position="222"/>
        <end position="224"/>
    </location>
    <ligand>
        <name>ATP</name>
        <dbReference type="ChEBI" id="CHEBI:30616"/>
    </ligand>
</feature>
<feature type="binding site" evidence="1">
    <location>
        <position position="222"/>
    </location>
    <ligand>
        <name>L-aspartate</name>
        <dbReference type="ChEBI" id="CHEBI:29991"/>
    </ligand>
</feature>
<feature type="binding site" evidence="1">
    <location>
        <position position="231"/>
    </location>
    <ligand>
        <name>ATP</name>
        <dbReference type="ChEBI" id="CHEBI:30616"/>
    </ligand>
</feature>
<feature type="binding site" evidence="1">
    <location>
        <position position="450"/>
    </location>
    <ligand>
        <name>L-aspartate</name>
        <dbReference type="ChEBI" id="CHEBI:29991"/>
    </ligand>
</feature>
<feature type="binding site" evidence="1">
    <location>
        <position position="484"/>
    </location>
    <ligand>
        <name>ATP</name>
        <dbReference type="ChEBI" id="CHEBI:30616"/>
    </ligand>
</feature>
<feature type="binding site" evidence="1">
    <location>
        <position position="491"/>
    </location>
    <ligand>
        <name>L-aspartate</name>
        <dbReference type="ChEBI" id="CHEBI:29991"/>
    </ligand>
</feature>
<feature type="binding site" evidence="1">
    <location>
        <begin position="536"/>
        <end position="539"/>
    </location>
    <ligand>
        <name>ATP</name>
        <dbReference type="ChEBI" id="CHEBI:30616"/>
    </ligand>
</feature>
<feature type="site" description="Important for tRNA non-discrimination" evidence="1">
    <location>
        <position position="84"/>
    </location>
</feature>
<accession>B9IYX5</accession>
<comment type="function">
    <text evidence="1">Aspartyl-tRNA synthetase with relaxed tRNA specificity since it is able to aspartylate not only its cognate tRNA(Asp) but also tRNA(Asn). Reaction proceeds in two steps: L-aspartate is first activated by ATP to form Asp-AMP and then transferred to the acceptor end of tRNA(Asp/Asn).</text>
</comment>
<comment type="catalytic activity">
    <reaction evidence="1">
        <text>tRNA(Asx) + L-aspartate + ATP = L-aspartyl-tRNA(Asx) + AMP + diphosphate</text>
        <dbReference type="Rhea" id="RHEA:18349"/>
        <dbReference type="Rhea" id="RHEA-COMP:9710"/>
        <dbReference type="Rhea" id="RHEA-COMP:9711"/>
        <dbReference type="ChEBI" id="CHEBI:29991"/>
        <dbReference type="ChEBI" id="CHEBI:30616"/>
        <dbReference type="ChEBI" id="CHEBI:33019"/>
        <dbReference type="ChEBI" id="CHEBI:78442"/>
        <dbReference type="ChEBI" id="CHEBI:78516"/>
        <dbReference type="ChEBI" id="CHEBI:456215"/>
        <dbReference type="EC" id="6.1.1.23"/>
    </reaction>
</comment>
<comment type="subunit">
    <text evidence="1">Homodimer.</text>
</comment>
<comment type="subcellular location">
    <subcellularLocation>
        <location evidence="1">Cytoplasm</location>
    </subcellularLocation>
</comment>
<comment type="similarity">
    <text evidence="1">Belongs to the class-II aminoacyl-tRNA synthetase family. Type 1 subfamily.</text>
</comment>